<gene>
    <name evidence="1" type="primary">pstB</name>
    <name type="ordered locus">XOO2465</name>
</gene>
<comment type="function">
    <text evidence="1">Part of the ABC transporter complex PstSACB involved in phosphate import. Responsible for energy coupling to the transport system.</text>
</comment>
<comment type="catalytic activity">
    <reaction evidence="1">
        <text>phosphate(out) + ATP + H2O = ADP + 2 phosphate(in) + H(+)</text>
        <dbReference type="Rhea" id="RHEA:24440"/>
        <dbReference type="ChEBI" id="CHEBI:15377"/>
        <dbReference type="ChEBI" id="CHEBI:15378"/>
        <dbReference type="ChEBI" id="CHEBI:30616"/>
        <dbReference type="ChEBI" id="CHEBI:43474"/>
        <dbReference type="ChEBI" id="CHEBI:456216"/>
        <dbReference type="EC" id="7.3.2.1"/>
    </reaction>
</comment>
<comment type="subunit">
    <text evidence="1">The complex is composed of two ATP-binding proteins (PstB), two transmembrane proteins (PstC and PstA) and a solute-binding protein (PstS).</text>
</comment>
<comment type="subcellular location">
    <subcellularLocation>
        <location evidence="1">Cell inner membrane</location>
        <topology evidence="1">Peripheral membrane protein</topology>
    </subcellularLocation>
</comment>
<comment type="similarity">
    <text evidence="1">Belongs to the ABC transporter superfamily. Phosphate importer (TC 3.A.1.7) family.</text>
</comment>
<comment type="sequence caution" evidence="2">
    <conflict type="erroneous initiation">
        <sequence resource="EMBL-CDS" id="AAW75719"/>
    </conflict>
</comment>
<feature type="chain" id="PRO_0000272576" description="Phosphate import ATP-binding protein PstB">
    <location>
        <begin position="1"/>
        <end position="267"/>
    </location>
</feature>
<feature type="domain" description="ABC transporter" evidence="1">
    <location>
        <begin position="21"/>
        <end position="262"/>
    </location>
</feature>
<feature type="binding site" evidence="1">
    <location>
        <begin position="53"/>
        <end position="60"/>
    </location>
    <ligand>
        <name>ATP</name>
        <dbReference type="ChEBI" id="CHEBI:30616"/>
    </ligand>
</feature>
<keyword id="KW-0067">ATP-binding</keyword>
<keyword id="KW-0997">Cell inner membrane</keyword>
<keyword id="KW-1003">Cell membrane</keyword>
<keyword id="KW-0472">Membrane</keyword>
<keyword id="KW-0547">Nucleotide-binding</keyword>
<keyword id="KW-0592">Phosphate transport</keyword>
<keyword id="KW-1185">Reference proteome</keyword>
<keyword id="KW-1278">Translocase</keyword>
<keyword id="KW-0813">Transport</keyword>
<organism>
    <name type="scientific">Xanthomonas oryzae pv. oryzae (strain KACC10331 / KXO85)</name>
    <dbReference type="NCBI Taxonomy" id="291331"/>
    <lineage>
        <taxon>Bacteria</taxon>
        <taxon>Pseudomonadati</taxon>
        <taxon>Pseudomonadota</taxon>
        <taxon>Gammaproteobacteria</taxon>
        <taxon>Lysobacterales</taxon>
        <taxon>Lysobacteraceae</taxon>
        <taxon>Xanthomonas</taxon>
    </lineage>
</organism>
<evidence type="ECO:0000255" key="1">
    <source>
        <dbReference type="HAMAP-Rule" id="MF_01702"/>
    </source>
</evidence>
<evidence type="ECO:0000305" key="2"/>
<reference key="1">
    <citation type="journal article" date="2005" name="Nucleic Acids Res.">
        <title>The genome sequence of Xanthomonas oryzae pathovar oryzae KACC10331, the bacterial blight pathogen of rice.</title>
        <authorList>
            <person name="Lee B.-M."/>
            <person name="Park Y.-J."/>
            <person name="Park D.-S."/>
            <person name="Kang H.-W."/>
            <person name="Kim J.-G."/>
            <person name="Song E.-S."/>
            <person name="Park I.-C."/>
            <person name="Yoon U.-H."/>
            <person name="Hahn J.-H."/>
            <person name="Koo B.-S."/>
            <person name="Lee G.-B."/>
            <person name="Kim H."/>
            <person name="Park H.-S."/>
            <person name="Yoon K.-O."/>
            <person name="Kim J.-H."/>
            <person name="Jung C.-H."/>
            <person name="Koh N.-H."/>
            <person name="Seo J.-S."/>
            <person name="Go S.-J."/>
        </authorList>
    </citation>
    <scope>NUCLEOTIDE SEQUENCE [LARGE SCALE GENOMIC DNA]</scope>
    <source>
        <strain>KACC10331 / KXO85</strain>
    </source>
</reference>
<sequence>MHRIAVPAATGAQTAQAPVKVAARNLDFYYDKYHALKSINIEIPEKRVTALIGPSGCGKSTLLRIFNRIYALYPKMEARGEVLLDNENILSPKYPMNRLRSKVGMVFQKPVPFPMTIFENVAYGIRHHEKLSKADMQNRVEHALRQGALWDEVKDKLGQSALGLSGGQQQRLCIARAVALRPDVLLLDEPTSALDPISTSRIEQLVEELKRDYTIVIVTHNMQQAARVSDYTAFMYLGDLIEHDRTETIFSQPSKQQTEDYITGRFG</sequence>
<protein>
    <recommendedName>
        <fullName evidence="1">Phosphate import ATP-binding protein PstB</fullName>
        <ecNumber evidence="1">7.3.2.1</ecNumber>
    </recommendedName>
    <alternativeName>
        <fullName evidence="1">ABC phosphate transporter</fullName>
    </alternativeName>
    <alternativeName>
        <fullName evidence="1">Phosphate-transporting ATPase</fullName>
    </alternativeName>
</protein>
<accession>Q5H002</accession>
<dbReference type="EC" id="7.3.2.1" evidence="1"/>
<dbReference type="EMBL" id="AE013598">
    <property type="protein sequence ID" value="AAW75719.1"/>
    <property type="status" value="ALT_INIT"/>
    <property type="molecule type" value="Genomic_DNA"/>
</dbReference>
<dbReference type="SMR" id="Q5H002"/>
<dbReference type="STRING" id="291331.XOO2465"/>
<dbReference type="KEGG" id="xoo:XOO2465"/>
<dbReference type="HOGENOM" id="CLU_000604_1_22_6"/>
<dbReference type="Proteomes" id="UP000006735">
    <property type="component" value="Chromosome"/>
</dbReference>
<dbReference type="GO" id="GO:0005886">
    <property type="term" value="C:plasma membrane"/>
    <property type="evidence" value="ECO:0007669"/>
    <property type="project" value="UniProtKB-SubCell"/>
</dbReference>
<dbReference type="GO" id="GO:0005524">
    <property type="term" value="F:ATP binding"/>
    <property type="evidence" value="ECO:0007669"/>
    <property type="project" value="UniProtKB-KW"/>
</dbReference>
<dbReference type="GO" id="GO:0016887">
    <property type="term" value="F:ATP hydrolysis activity"/>
    <property type="evidence" value="ECO:0007669"/>
    <property type="project" value="InterPro"/>
</dbReference>
<dbReference type="GO" id="GO:0015415">
    <property type="term" value="F:ATPase-coupled phosphate ion transmembrane transporter activity"/>
    <property type="evidence" value="ECO:0007669"/>
    <property type="project" value="UniProtKB-EC"/>
</dbReference>
<dbReference type="GO" id="GO:0035435">
    <property type="term" value="P:phosphate ion transmembrane transport"/>
    <property type="evidence" value="ECO:0007669"/>
    <property type="project" value="InterPro"/>
</dbReference>
<dbReference type="CDD" id="cd03260">
    <property type="entry name" value="ABC_PstB_phosphate_transporter"/>
    <property type="match status" value="1"/>
</dbReference>
<dbReference type="FunFam" id="3.40.50.300:FF:000132">
    <property type="entry name" value="Phosphate import ATP-binding protein PstB"/>
    <property type="match status" value="1"/>
</dbReference>
<dbReference type="Gene3D" id="3.40.50.300">
    <property type="entry name" value="P-loop containing nucleotide triphosphate hydrolases"/>
    <property type="match status" value="1"/>
</dbReference>
<dbReference type="InterPro" id="IPR003593">
    <property type="entry name" value="AAA+_ATPase"/>
</dbReference>
<dbReference type="InterPro" id="IPR003439">
    <property type="entry name" value="ABC_transporter-like_ATP-bd"/>
</dbReference>
<dbReference type="InterPro" id="IPR017871">
    <property type="entry name" value="ABC_transporter-like_CS"/>
</dbReference>
<dbReference type="InterPro" id="IPR027417">
    <property type="entry name" value="P-loop_NTPase"/>
</dbReference>
<dbReference type="InterPro" id="IPR005670">
    <property type="entry name" value="PstB-like"/>
</dbReference>
<dbReference type="NCBIfam" id="TIGR00972">
    <property type="entry name" value="3a0107s01c2"/>
    <property type="match status" value="1"/>
</dbReference>
<dbReference type="PANTHER" id="PTHR43423">
    <property type="entry name" value="ABC TRANSPORTER I FAMILY MEMBER 17"/>
    <property type="match status" value="1"/>
</dbReference>
<dbReference type="PANTHER" id="PTHR43423:SF3">
    <property type="entry name" value="PHOSPHATE IMPORT ATP-BINDING PROTEIN PSTB"/>
    <property type="match status" value="1"/>
</dbReference>
<dbReference type="Pfam" id="PF00005">
    <property type="entry name" value="ABC_tran"/>
    <property type="match status" value="1"/>
</dbReference>
<dbReference type="SMART" id="SM00382">
    <property type="entry name" value="AAA"/>
    <property type="match status" value="1"/>
</dbReference>
<dbReference type="SUPFAM" id="SSF52540">
    <property type="entry name" value="P-loop containing nucleoside triphosphate hydrolases"/>
    <property type="match status" value="1"/>
</dbReference>
<dbReference type="PROSITE" id="PS00211">
    <property type="entry name" value="ABC_TRANSPORTER_1"/>
    <property type="match status" value="1"/>
</dbReference>
<dbReference type="PROSITE" id="PS50893">
    <property type="entry name" value="ABC_TRANSPORTER_2"/>
    <property type="match status" value="1"/>
</dbReference>
<dbReference type="PROSITE" id="PS51238">
    <property type="entry name" value="PSTB"/>
    <property type="match status" value="1"/>
</dbReference>
<proteinExistence type="inferred from homology"/>
<name>PSTB_XANOR</name>